<sequence>MASYLDFEKNIQQIDEDIINAQIKGDTEAVSILKKNLEKEISKTYKNLSDFQRLQLARHPDRPYALDYIELILNDAHEIHGDRAFRDDPAIVCFMGYLGEKKIIVIGEQKGRGTKDKIARNFGMPHPEGYRKALRVARLAEKFQIPILFLIDTPGAYPGIGAEERGQSEAIARNLYELSDLKIPTIAIVIGEGGSGGALAIGVADKLVMMKNSVFSVISPEGCAAILWNDPAKSEAATKAMKVTADDLKSQGLIDDVIDEPTNGAHRNKEAAAVAIADYVKKSLNELENIDVRELSANRMQKILKLGAYQEA</sequence>
<dbReference type="EC" id="2.1.3.15" evidence="1"/>
<dbReference type="EMBL" id="CP000025">
    <property type="protein sequence ID" value="AAW35083.1"/>
    <property type="molecule type" value="Genomic_DNA"/>
</dbReference>
<dbReference type="RefSeq" id="WP_002867621.1">
    <property type="nucleotide sequence ID" value="NC_003912.7"/>
</dbReference>
<dbReference type="SMR" id="Q5HW21"/>
<dbReference type="KEGG" id="cjr:CJE0495"/>
<dbReference type="HOGENOM" id="CLU_015486_0_2_7"/>
<dbReference type="UniPathway" id="UPA00655">
    <property type="reaction ID" value="UER00711"/>
</dbReference>
<dbReference type="GO" id="GO:0009317">
    <property type="term" value="C:acetyl-CoA carboxylase complex"/>
    <property type="evidence" value="ECO:0007669"/>
    <property type="project" value="InterPro"/>
</dbReference>
<dbReference type="GO" id="GO:0003989">
    <property type="term" value="F:acetyl-CoA carboxylase activity"/>
    <property type="evidence" value="ECO:0007669"/>
    <property type="project" value="InterPro"/>
</dbReference>
<dbReference type="GO" id="GO:0005524">
    <property type="term" value="F:ATP binding"/>
    <property type="evidence" value="ECO:0007669"/>
    <property type="project" value="UniProtKB-KW"/>
</dbReference>
<dbReference type="GO" id="GO:0016743">
    <property type="term" value="F:carboxyl- or carbamoyltransferase activity"/>
    <property type="evidence" value="ECO:0007669"/>
    <property type="project" value="UniProtKB-UniRule"/>
</dbReference>
<dbReference type="GO" id="GO:0006633">
    <property type="term" value="P:fatty acid biosynthetic process"/>
    <property type="evidence" value="ECO:0007669"/>
    <property type="project" value="UniProtKB-KW"/>
</dbReference>
<dbReference type="GO" id="GO:2001295">
    <property type="term" value="P:malonyl-CoA biosynthetic process"/>
    <property type="evidence" value="ECO:0007669"/>
    <property type="project" value="UniProtKB-UniRule"/>
</dbReference>
<dbReference type="Gene3D" id="3.90.226.10">
    <property type="entry name" value="2-enoyl-CoA Hydratase, Chain A, domain 1"/>
    <property type="match status" value="1"/>
</dbReference>
<dbReference type="HAMAP" id="MF_00823">
    <property type="entry name" value="AcetylCoA_CT_alpha"/>
    <property type="match status" value="1"/>
</dbReference>
<dbReference type="InterPro" id="IPR001095">
    <property type="entry name" value="Acetyl_CoA_COase_a_su"/>
</dbReference>
<dbReference type="InterPro" id="IPR029045">
    <property type="entry name" value="ClpP/crotonase-like_dom_sf"/>
</dbReference>
<dbReference type="InterPro" id="IPR011763">
    <property type="entry name" value="COA_CT_C"/>
</dbReference>
<dbReference type="NCBIfam" id="TIGR00513">
    <property type="entry name" value="accA"/>
    <property type="match status" value="1"/>
</dbReference>
<dbReference type="NCBIfam" id="NF041504">
    <property type="entry name" value="AccA_sub"/>
    <property type="match status" value="1"/>
</dbReference>
<dbReference type="NCBIfam" id="NF004344">
    <property type="entry name" value="PRK05724.1"/>
    <property type="match status" value="1"/>
</dbReference>
<dbReference type="PANTHER" id="PTHR42853">
    <property type="entry name" value="ACETYL-COENZYME A CARBOXYLASE CARBOXYL TRANSFERASE SUBUNIT ALPHA"/>
    <property type="match status" value="1"/>
</dbReference>
<dbReference type="PANTHER" id="PTHR42853:SF3">
    <property type="entry name" value="ACETYL-COENZYME A CARBOXYLASE CARBOXYL TRANSFERASE SUBUNIT ALPHA, CHLOROPLASTIC"/>
    <property type="match status" value="1"/>
</dbReference>
<dbReference type="Pfam" id="PF03255">
    <property type="entry name" value="ACCA"/>
    <property type="match status" value="1"/>
</dbReference>
<dbReference type="PRINTS" id="PR01069">
    <property type="entry name" value="ACCCTRFRASEA"/>
</dbReference>
<dbReference type="SUPFAM" id="SSF52096">
    <property type="entry name" value="ClpP/crotonase"/>
    <property type="match status" value="1"/>
</dbReference>
<dbReference type="PROSITE" id="PS50989">
    <property type="entry name" value="COA_CT_CTER"/>
    <property type="match status" value="1"/>
</dbReference>
<reference key="1">
    <citation type="journal article" date="2005" name="PLoS Biol.">
        <title>Major structural differences and novel potential virulence mechanisms from the genomes of multiple Campylobacter species.</title>
        <authorList>
            <person name="Fouts D.E."/>
            <person name="Mongodin E.F."/>
            <person name="Mandrell R.E."/>
            <person name="Miller W.G."/>
            <person name="Rasko D.A."/>
            <person name="Ravel J."/>
            <person name="Brinkac L.M."/>
            <person name="DeBoy R.T."/>
            <person name="Parker C.T."/>
            <person name="Daugherty S.C."/>
            <person name="Dodson R.J."/>
            <person name="Durkin A.S."/>
            <person name="Madupu R."/>
            <person name="Sullivan S.A."/>
            <person name="Shetty J.U."/>
            <person name="Ayodeji M.A."/>
            <person name="Shvartsbeyn A."/>
            <person name="Schatz M.C."/>
            <person name="Badger J.H."/>
            <person name="Fraser C.M."/>
            <person name="Nelson K.E."/>
        </authorList>
    </citation>
    <scope>NUCLEOTIDE SEQUENCE [LARGE SCALE GENOMIC DNA]</scope>
    <source>
        <strain>RM1221</strain>
    </source>
</reference>
<gene>
    <name evidence="1" type="primary">accA</name>
    <name type="ordered locus">CJE0495</name>
</gene>
<feature type="chain" id="PRO_0000223748" description="Acetyl-coenzyme A carboxylase carboxyl transferase subunit alpha">
    <location>
        <begin position="1"/>
        <end position="312"/>
    </location>
</feature>
<feature type="domain" description="CoA carboxyltransferase C-terminal" evidence="2">
    <location>
        <begin position="36"/>
        <end position="286"/>
    </location>
</feature>
<comment type="function">
    <text evidence="1">Component of the acetyl coenzyme A carboxylase (ACC) complex. First, biotin carboxylase catalyzes the carboxylation of biotin on its carrier protein (BCCP) and then the CO(2) group is transferred by the carboxyltransferase to acetyl-CoA to form malonyl-CoA.</text>
</comment>
<comment type="catalytic activity">
    <reaction evidence="1">
        <text>N(6)-carboxybiotinyl-L-lysyl-[protein] + acetyl-CoA = N(6)-biotinyl-L-lysyl-[protein] + malonyl-CoA</text>
        <dbReference type="Rhea" id="RHEA:54728"/>
        <dbReference type="Rhea" id="RHEA-COMP:10505"/>
        <dbReference type="Rhea" id="RHEA-COMP:10506"/>
        <dbReference type="ChEBI" id="CHEBI:57288"/>
        <dbReference type="ChEBI" id="CHEBI:57384"/>
        <dbReference type="ChEBI" id="CHEBI:83144"/>
        <dbReference type="ChEBI" id="CHEBI:83145"/>
        <dbReference type="EC" id="2.1.3.15"/>
    </reaction>
</comment>
<comment type="pathway">
    <text evidence="1">Lipid metabolism; malonyl-CoA biosynthesis; malonyl-CoA from acetyl-CoA: step 1/1.</text>
</comment>
<comment type="subunit">
    <text evidence="1">Acetyl-CoA carboxylase is a heterohexamer composed of biotin carboxyl carrier protein (AccB), biotin carboxylase (AccC) and two subunits each of ACCase subunit alpha (AccA) and ACCase subunit beta (AccD).</text>
</comment>
<comment type="subcellular location">
    <subcellularLocation>
        <location evidence="1">Cytoplasm</location>
    </subcellularLocation>
</comment>
<comment type="similarity">
    <text evidence="1">Belongs to the AccA family.</text>
</comment>
<keyword id="KW-0067">ATP-binding</keyword>
<keyword id="KW-0963">Cytoplasm</keyword>
<keyword id="KW-0275">Fatty acid biosynthesis</keyword>
<keyword id="KW-0276">Fatty acid metabolism</keyword>
<keyword id="KW-0444">Lipid biosynthesis</keyword>
<keyword id="KW-0443">Lipid metabolism</keyword>
<keyword id="KW-0547">Nucleotide-binding</keyword>
<keyword id="KW-0808">Transferase</keyword>
<protein>
    <recommendedName>
        <fullName evidence="1">Acetyl-coenzyme A carboxylase carboxyl transferase subunit alpha</fullName>
        <shortName evidence="1">ACCase subunit alpha</shortName>
        <shortName evidence="1">Acetyl-CoA carboxylase carboxyltransferase subunit alpha</shortName>
        <ecNumber evidence="1">2.1.3.15</ecNumber>
    </recommendedName>
</protein>
<name>ACCA_CAMJR</name>
<evidence type="ECO:0000255" key="1">
    <source>
        <dbReference type="HAMAP-Rule" id="MF_00823"/>
    </source>
</evidence>
<evidence type="ECO:0000255" key="2">
    <source>
        <dbReference type="PROSITE-ProRule" id="PRU01137"/>
    </source>
</evidence>
<organism>
    <name type="scientific">Campylobacter jejuni (strain RM1221)</name>
    <dbReference type="NCBI Taxonomy" id="195099"/>
    <lineage>
        <taxon>Bacteria</taxon>
        <taxon>Pseudomonadati</taxon>
        <taxon>Campylobacterota</taxon>
        <taxon>Epsilonproteobacteria</taxon>
        <taxon>Campylobacterales</taxon>
        <taxon>Campylobacteraceae</taxon>
        <taxon>Campylobacter</taxon>
    </lineage>
</organism>
<proteinExistence type="inferred from homology"/>
<accession>Q5HW21</accession>